<proteinExistence type="inferred from homology"/>
<name>CARB_STAEQ</name>
<evidence type="ECO:0000255" key="1">
    <source>
        <dbReference type="HAMAP-Rule" id="MF_01210"/>
    </source>
</evidence>
<sequence length="1057" mass="117407">MPKRDDIQTILVVGSGPIIIGQAAEFDYAGTQACLALKEEGYRVILVNSNPATIMTDKEIADKVYIEPLTHDFIARIIRKEQPDALLPTLGGQTGLNMAIQLHDSGVLEANNVKLLGTELESIQQAEDREMFRTLMNDLNVPVPESDIVNTVEQAFEFKEQVGYPLIVRPAFTMGGTGGGICHNDAELKEVVSNGLHYSPATQCLIEKSIAGYKEIEYEVMRDKNDNAIVVCNMENIDPVGIHTGDSIVVAPSQTLSDVEYQMLRDVSLKVIRALGIEGGCNVQLALDPHSLNYYIIEVNPRVSRSSALASKATGYPIAKLAAKIAVGLTLDEMLNPITGTSYAAFEPTLDYVISKIPRFPFDKFEKGERELGTQMKATGEVMAIGRTYEESLLKAIRSLEYGVHHLGLPNGESYELDYIKERIGHQDDERLFFIGEAIRRGTSLEELHNMTKIDYFFLNKFQNIIDIEHELKNHQGDLEYLKYAKDYGFSDKVIAHRWDMEEKDIYELRMSQNIKPVYKMVDTCAAEFESTTPYYYGTYEDENESIVTDKEKILVLGSGPIRIGQGVEFDYATVHAVWAIQNAGYEAIIVNNNPETVSTDFSISDKLYFEPLTEEDVMNIINLEQPKGVVVQFGGQTAINLADKLAQHGVKILGTSLEDLNRAEDRKEFEALLREISVPQPQGKTATSPKEALKNAREIGYPVVVRPSYVLGGRAMEIVDNDQELENYMTQAVKASPEHPVLVDRYLTGKEIEVDAISDGETVVIPGIMEHIERAGVHSGDSIAVYPPQTLTQDEINTLEDYTIKLAKGLNIKGLINIQFVIAHDGVYVLEVNPRSSRTVPFLSKITDIQMAQLAMRAIMGETLAEMGYKQGIQPYSEGVYVKAPVFSFNKLKNVDITLGPEMKSTGEVMGKDLTLEKALYKGLTGSGFEVKDHGTVLMTVSDKDKDEIVKIAHRLNEIGYKILATRGTAQKLKDHNIPVEVVGKIGGEDDLLTRIQNGEVQIVINTMTKGKEIERDGFQIRRTTVENGVPCLTSLDTASALTNVIESMTFTMRNV</sequence>
<organism>
    <name type="scientific">Staphylococcus epidermidis (strain ATCC 35984 / DSM 28319 / BCRC 17069 / CCUG 31568 / BM 3577 / RP62A)</name>
    <dbReference type="NCBI Taxonomy" id="176279"/>
    <lineage>
        <taxon>Bacteria</taxon>
        <taxon>Bacillati</taxon>
        <taxon>Bacillota</taxon>
        <taxon>Bacilli</taxon>
        <taxon>Bacillales</taxon>
        <taxon>Staphylococcaceae</taxon>
        <taxon>Staphylococcus</taxon>
    </lineage>
</organism>
<protein>
    <recommendedName>
        <fullName evidence="1">Carbamoyl phosphate synthase large chain</fullName>
        <ecNumber evidence="1">6.3.4.16</ecNumber>
        <ecNumber evidence="1">6.3.5.5</ecNumber>
    </recommendedName>
    <alternativeName>
        <fullName evidence="1">Carbamoyl phosphate synthetase ammonia chain</fullName>
    </alternativeName>
</protein>
<comment type="function">
    <text evidence="1">Large subunit of the glutamine-dependent carbamoyl phosphate synthetase (CPSase). CPSase catalyzes the formation of carbamoyl phosphate from the ammonia moiety of glutamine, carbonate, and phosphate donated by ATP, constituting the first step of 2 biosynthetic pathways, one leading to arginine and/or urea and the other to pyrimidine nucleotides. The large subunit (synthetase) binds the substrates ammonia (free or transferred from glutamine from the small subunit), hydrogencarbonate and ATP and carries out an ATP-coupled ligase reaction, activating hydrogencarbonate by forming carboxy phosphate which reacts with ammonia to form carbamoyl phosphate.</text>
</comment>
<comment type="catalytic activity">
    <reaction evidence="1">
        <text>hydrogencarbonate + L-glutamine + 2 ATP + H2O = carbamoyl phosphate + L-glutamate + 2 ADP + phosphate + 2 H(+)</text>
        <dbReference type="Rhea" id="RHEA:18633"/>
        <dbReference type="ChEBI" id="CHEBI:15377"/>
        <dbReference type="ChEBI" id="CHEBI:15378"/>
        <dbReference type="ChEBI" id="CHEBI:17544"/>
        <dbReference type="ChEBI" id="CHEBI:29985"/>
        <dbReference type="ChEBI" id="CHEBI:30616"/>
        <dbReference type="ChEBI" id="CHEBI:43474"/>
        <dbReference type="ChEBI" id="CHEBI:58228"/>
        <dbReference type="ChEBI" id="CHEBI:58359"/>
        <dbReference type="ChEBI" id="CHEBI:456216"/>
        <dbReference type="EC" id="6.3.5.5"/>
    </reaction>
</comment>
<comment type="catalytic activity">
    <molecule>Carbamoyl phosphate synthase large chain</molecule>
    <reaction evidence="1">
        <text>hydrogencarbonate + NH4(+) + 2 ATP = carbamoyl phosphate + 2 ADP + phosphate + 2 H(+)</text>
        <dbReference type="Rhea" id="RHEA:18029"/>
        <dbReference type="ChEBI" id="CHEBI:15378"/>
        <dbReference type="ChEBI" id="CHEBI:17544"/>
        <dbReference type="ChEBI" id="CHEBI:28938"/>
        <dbReference type="ChEBI" id="CHEBI:30616"/>
        <dbReference type="ChEBI" id="CHEBI:43474"/>
        <dbReference type="ChEBI" id="CHEBI:58228"/>
        <dbReference type="ChEBI" id="CHEBI:456216"/>
        <dbReference type="EC" id="6.3.4.16"/>
    </reaction>
</comment>
<comment type="cofactor">
    <cofactor evidence="1">
        <name>Mg(2+)</name>
        <dbReference type="ChEBI" id="CHEBI:18420"/>
    </cofactor>
    <cofactor evidence="1">
        <name>Mn(2+)</name>
        <dbReference type="ChEBI" id="CHEBI:29035"/>
    </cofactor>
    <text evidence="1">Binds 4 Mg(2+) or Mn(2+) ions per subunit.</text>
</comment>
<comment type="pathway">
    <text evidence="1">Amino-acid biosynthesis; L-arginine biosynthesis; carbamoyl phosphate from bicarbonate: step 1/1.</text>
</comment>
<comment type="pathway">
    <text evidence="1">Pyrimidine metabolism; UMP biosynthesis via de novo pathway; (S)-dihydroorotate from bicarbonate: step 1/3.</text>
</comment>
<comment type="subunit">
    <text evidence="1">Composed of two chains; the small (or glutamine) chain promotes the hydrolysis of glutamine to ammonia, which is used by the large (or ammonia) chain to synthesize carbamoyl phosphate. Tetramer of heterodimers (alpha,beta)4.</text>
</comment>
<comment type="domain">
    <text evidence="1">The large subunit is composed of 2 ATP-grasp domains that are involved in binding the 2 ATP molecules needed for carbamoyl phosphate synthesis. The N-terminal ATP-grasp domain (referred to as the carboxyphosphate synthetic component) catalyzes the ATP-dependent phosphorylation of hydrogencarbonate to carboxyphosphate and the subsequent nucleophilic attack by ammonia to form a carbamate intermediate. The C-terminal ATP-grasp domain (referred to as the carbamoyl phosphate synthetic component) then catalyzes the phosphorylation of carbamate with the second ATP to form the end product carbamoyl phosphate. The reactive and unstable enzyme intermediates are sequentially channeled from one active site to the next through the interior of the protein over a distance of at least 96 A.</text>
</comment>
<comment type="similarity">
    <text evidence="1">Belongs to the CarB family.</text>
</comment>
<accession>Q5HPY8</accession>
<gene>
    <name evidence="1" type="primary">carB</name>
    <name type="ordered locus">SERP0769</name>
</gene>
<keyword id="KW-0028">Amino-acid biosynthesis</keyword>
<keyword id="KW-0055">Arginine biosynthesis</keyword>
<keyword id="KW-0067">ATP-binding</keyword>
<keyword id="KW-0436">Ligase</keyword>
<keyword id="KW-0460">Magnesium</keyword>
<keyword id="KW-0464">Manganese</keyword>
<keyword id="KW-0479">Metal-binding</keyword>
<keyword id="KW-0547">Nucleotide-binding</keyword>
<keyword id="KW-0665">Pyrimidine biosynthesis</keyword>
<keyword id="KW-1185">Reference proteome</keyword>
<keyword id="KW-0677">Repeat</keyword>
<feature type="chain" id="PRO_0000145044" description="Carbamoyl phosphate synthase large chain">
    <location>
        <begin position="1"/>
        <end position="1057"/>
    </location>
</feature>
<feature type="domain" description="ATP-grasp 1" evidence="1">
    <location>
        <begin position="133"/>
        <end position="327"/>
    </location>
</feature>
<feature type="domain" description="ATP-grasp 2" evidence="1">
    <location>
        <begin position="671"/>
        <end position="861"/>
    </location>
</feature>
<feature type="domain" description="MGS-like" evidence="1">
    <location>
        <begin position="930"/>
        <end position="1057"/>
    </location>
</feature>
<feature type="region of interest" description="Carboxyphosphate synthetic domain" evidence="1">
    <location>
        <begin position="1"/>
        <end position="401"/>
    </location>
</feature>
<feature type="region of interest" description="Oligomerization domain" evidence="1">
    <location>
        <begin position="402"/>
        <end position="546"/>
    </location>
</feature>
<feature type="region of interest" description="Carbamoyl phosphate synthetic domain" evidence="1">
    <location>
        <begin position="547"/>
        <end position="929"/>
    </location>
</feature>
<feature type="region of interest" description="Allosteric domain" evidence="1">
    <location>
        <begin position="930"/>
        <end position="1057"/>
    </location>
</feature>
<feature type="binding site" evidence="1">
    <location>
        <position position="129"/>
    </location>
    <ligand>
        <name>ATP</name>
        <dbReference type="ChEBI" id="CHEBI:30616"/>
        <label>1</label>
    </ligand>
</feature>
<feature type="binding site" evidence="1">
    <location>
        <position position="169"/>
    </location>
    <ligand>
        <name>ATP</name>
        <dbReference type="ChEBI" id="CHEBI:30616"/>
        <label>1</label>
    </ligand>
</feature>
<feature type="binding site" evidence="1">
    <location>
        <position position="175"/>
    </location>
    <ligand>
        <name>ATP</name>
        <dbReference type="ChEBI" id="CHEBI:30616"/>
        <label>1</label>
    </ligand>
</feature>
<feature type="binding site" evidence="1">
    <location>
        <position position="176"/>
    </location>
    <ligand>
        <name>ATP</name>
        <dbReference type="ChEBI" id="CHEBI:30616"/>
        <label>1</label>
    </ligand>
</feature>
<feature type="binding site" evidence="1">
    <location>
        <position position="208"/>
    </location>
    <ligand>
        <name>ATP</name>
        <dbReference type="ChEBI" id="CHEBI:30616"/>
        <label>1</label>
    </ligand>
</feature>
<feature type="binding site" evidence="1">
    <location>
        <position position="210"/>
    </location>
    <ligand>
        <name>ATP</name>
        <dbReference type="ChEBI" id="CHEBI:30616"/>
        <label>1</label>
    </ligand>
</feature>
<feature type="binding site" evidence="1">
    <location>
        <position position="215"/>
    </location>
    <ligand>
        <name>ATP</name>
        <dbReference type="ChEBI" id="CHEBI:30616"/>
        <label>1</label>
    </ligand>
</feature>
<feature type="binding site" evidence="1">
    <location>
        <position position="241"/>
    </location>
    <ligand>
        <name>ATP</name>
        <dbReference type="ChEBI" id="CHEBI:30616"/>
        <label>1</label>
    </ligand>
</feature>
<feature type="binding site" evidence="1">
    <location>
        <position position="242"/>
    </location>
    <ligand>
        <name>ATP</name>
        <dbReference type="ChEBI" id="CHEBI:30616"/>
        <label>1</label>
    </ligand>
</feature>
<feature type="binding site" evidence="1">
    <location>
        <position position="243"/>
    </location>
    <ligand>
        <name>ATP</name>
        <dbReference type="ChEBI" id="CHEBI:30616"/>
        <label>1</label>
    </ligand>
</feature>
<feature type="binding site" evidence="1">
    <location>
        <position position="284"/>
    </location>
    <ligand>
        <name>ATP</name>
        <dbReference type="ChEBI" id="CHEBI:30616"/>
        <label>1</label>
    </ligand>
</feature>
<feature type="binding site" evidence="1">
    <location>
        <position position="284"/>
    </location>
    <ligand>
        <name>Mg(2+)</name>
        <dbReference type="ChEBI" id="CHEBI:18420"/>
        <label>1</label>
    </ligand>
</feature>
<feature type="binding site" evidence="1">
    <location>
        <position position="284"/>
    </location>
    <ligand>
        <name>Mn(2+)</name>
        <dbReference type="ChEBI" id="CHEBI:29035"/>
        <label>1</label>
    </ligand>
</feature>
<feature type="binding site" evidence="1">
    <location>
        <position position="298"/>
    </location>
    <ligand>
        <name>ATP</name>
        <dbReference type="ChEBI" id="CHEBI:30616"/>
        <label>1</label>
    </ligand>
</feature>
<feature type="binding site" evidence="1">
    <location>
        <position position="298"/>
    </location>
    <ligand>
        <name>Mg(2+)</name>
        <dbReference type="ChEBI" id="CHEBI:18420"/>
        <label>1</label>
    </ligand>
</feature>
<feature type="binding site" evidence="1">
    <location>
        <position position="298"/>
    </location>
    <ligand>
        <name>Mg(2+)</name>
        <dbReference type="ChEBI" id="CHEBI:18420"/>
        <label>2</label>
    </ligand>
</feature>
<feature type="binding site" evidence="1">
    <location>
        <position position="298"/>
    </location>
    <ligand>
        <name>Mn(2+)</name>
        <dbReference type="ChEBI" id="CHEBI:29035"/>
        <label>1</label>
    </ligand>
</feature>
<feature type="binding site" evidence="1">
    <location>
        <position position="298"/>
    </location>
    <ligand>
        <name>Mn(2+)</name>
        <dbReference type="ChEBI" id="CHEBI:29035"/>
        <label>2</label>
    </ligand>
</feature>
<feature type="binding site" evidence="1">
    <location>
        <position position="300"/>
    </location>
    <ligand>
        <name>Mg(2+)</name>
        <dbReference type="ChEBI" id="CHEBI:18420"/>
        <label>2</label>
    </ligand>
</feature>
<feature type="binding site" evidence="1">
    <location>
        <position position="300"/>
    </location>
    <ligand>
        <name>Mn(2+)</name>
        <dbReference type="ChEBI" id="CHEBI:29035"/>
        <label>2</label>
    </ligand>
</feature>
<feature type="binding site" evidence="1">
    <location>
        <position position="707"/>
    </location>
    <ligand>
        <name>ATP</name>
        <dbReference type="ChEBI" id="CHEBI:30616"/>
        <label>2</label>
    </ligand>
</feature>
<feature type="binding site" evidence="1">
    <location>
        <position position="746"/>
    </location>
    <ligand>
        <name>ATP</name>
        <dbReference type="ChEBI" id="CHEBI:30616"/>
        <label>2</label>
    </ligand>
</feature>
<feature type="binding site" evidence="1">
    <location>
        <position position="748"/>
    </location>
    <ligand>
        <name>ATP</name>
        <dbReference type="ChEBI" id="CHEBI:30616"/>
        <label>2</label>
    </ligand>
</feature>
<feature type="binding site" evidence="1">
    <location>
        <position position="752"/>
    </location>
    <ligand>
        <name>ATP</name>
        <dbReference type="ChEBI" id="CHEBI:30616"/>
        <label>2</label>
    </ligand>
</feature>
<feature type="binding site" evidence="1">
    <location>
        <position position="777"/>
    </location>
    <ligand>
        <name>ATP</name>
        <dbReference type="ChEBI" id="CHEBI:30616"/>
        <label>2</label>
    </ligand>
</feature>
<feature type="binding site" evidence="1">
    <location>
        <position position="778"/>
    </location>
    <ligand>
        <name>ATP</name>
        <dbReference type="ChEBI" id="CHEBI:30616"/>
        <label>2</label>
    </ligand>
</feature>
<feature type="binding site" evidence="1">
    <location>
        <position position="779"/>
    </location>
    <ligand>
        <name>ATP</name>
        <dbReference type="ChEBI" id="CHEBI:30616"/>
        <label>2</label>
    </ligand>
</feature>
<feature type="binding site" evidence="1">
    <location>
        <position position="780"/>
    </location>
    <ligand>
        <name>ATP</name>
        <dbReference type="ChEBI" id="CHEBI:30616"/>
        <label>2</label>
    </ligand>
</feature>
<feature type="binding site" evidence="1">
    <location>
        <position position="820"/>
    </location>
    <ligand>
        <name>ATP</name>
        <dbReference type="ChEBI" id="CHEBI:30616"/>
        <label>2</label>
    </ligand>
</feature>
<feature type="binding site" evidence="1">
    <location>
        <position position="820"/>
    </location>
    <ligand>
        <name>Mg(2+)</name>
        <dbReference type="ChEBI" id="CHEBI:18420"/>
        <label>3</label>
    </ligand>
</feature>
<feature type="binding site" evidence="1">
    <location>
        <position position="820"/>
    </location>
    <ligand>
        <name>Mn(2+)</name>
        <dbReference type="ChEBI" id="CHEBI:29035"/>
        <label>3</label>
    </ligand>
</feature>
<feature type="binding site" evidence="1">
    <location>
        <position position="832"/>
    </location>
    <ligand>
        <name>ATP</name>
        <dbReference type="ChEBI" id="CHEBI:30616"/>
        <label>2</label>
    </ligand>
</feature>
<feature type="binding site" evidence="1">
    <location>
        <position position="832"/>
    </location>
    <ligand>
        <name>Mg(2+)</name>
        <dbReference type="ChEBI" id="CHEBI:18420"/>
        <label>3</label>
    </ligand>
</feature>
<feature type="binding site" evidence="1">
    <location>
        <position position="832"/>
    </location>
    <ligand>
        <name>Mg(2+)</name>
        <dbReference type="ChEBI" id="CHEBI:18420"/>
        <label>4</label>
    </ligand>
</feature>
<feature type="binding site" evidence="1">
    <location>
        <position position="832"/>
    </location>
    <ligand>
        <name>Mn(2+)</name>
        <dbReference type="ChEBI" id="CHEBI:29035"/>
        <label>3</label>
    </ligand>
</feature>
<feature type="binding site" evidence="1">
    <location>
        <position position="832"/>
    </location>
    <ligand>
        <name>Mn(2+)</name>
        <dbReference type="ChEBI" id="CHEBI:29035"/>
        <label>4</label>
    </ligand>
</feature>
<feature type="binding site" evidence="1">
    <location>
        <position position="834"/>
    </location>
    <ligand>
        <name>Mg(2+)</name>
        <dbReference type="ChEBI" id="CHEBI:18420"/>
        <label>4</label>
    </ligand>
</feature>
<feature type="binding site" evidence="1">
    <location>
        <position position="834"/>
    </location>
    <ligand>
        <name>Mn(2+)</name>
        <dbReference type="ChEBI" id="CHEBI:29035"/>
        <label>4</label>
    </ligand>
</feature>
<dbReference type="EC" id="6.3.4.16" evidence="1"/>
<dbReference type="EC" id="6.3.5.5" evidence="1"/>
<dbReference type="EMBL" id="CP000029">
    <property type="protein sequence ID" value="AAW54172.1"/>
    <property type="molecule type" value="Genomic_DNA"/>
</dbReference>
<dbReference type="RefSeq" id="WP_002446245.1">
    <property type="nucleotide sequence ID" value="NC_002976.3"/>
</dbReference>
<dbReference type="SMR" id="Q5HPY8"/>
<dbReference type="STRING" id="176279.SERP0769"/>
<dbReference type="KEGG" id="ser:SERP0769"/>
<dbReference type="eggNOG" id="COG0458">
    <property type="taxonomic scope" value="Bacteria"/>
</dbReference>
<dbReference type="HOGENOM" id="CLU_000513_1_0_9"/>
<dbReference type="UniPathway" id="UPA00068">
    <property type="reaction ID" value="UER00171"/>
</dbReference>
<dbReference type="UniPathway" id="UPA00070">
    <property type="reaction ID" value="UER00115"/>
</dbReference>
<dbReference type="Proteomes" id="UP000000531">
    <property type="component" value="Chromosome"/>
</dbReference>
<dbReference type="GO" id="GO:0005737">
    <property type="term" value="C:cytoplasm"/>
    <property type="evidence" value="ECO:0007669"/>
    <property type="project" value="TreeGrafter"/>
</dbReference>
<dbReference type="GO" id="GO:0005524">
    <property type="term" value="F:ATP binding"/>
    <property type="evidence" value="ECO:0007669"/>
    <property type="project" value="UniProtKB-UniRule"/>
</dbReference>
<dbReference type="GO" id="GO:0004087">
    <property type="term" value="F:carbamoyl-phosphate synthase (ammonia) activity"/>
    <property type="evidence" value="ECO:0007669"/>
    <property type="project" value="RHEA"/>
</dbReference>
<dbReference type="GO" id="GO:0004088">
    <property type="term" value="F:carbamoyl-phosphate synthase (glutamine-hydrolyzing) activity"/>
    <property type="evidence" value="ECO:0007669"/>
    <property type="project" value="UniProtKB-UniRule"/>
</dbReference>
<dbReference type="GO" id="GO:0046872">
    <property type="term" value="F:metal ion binding"/>
    <property type="evidence" value="ECO:0007669"/>
    <property type="project" value="UniProtKB-KW"/>
</dbReference>
<dbReference type="GO" id="GO:0044205">
    <property type="term" value="P:'de novo' UMP biosynthetic process"/>
    <property type="evidence" value="ECO:0007669"/>
    <property type="project" value="UniProtKB-UniRule"/>
</dbReference>
<dbReference type="GO" id="GO:0006541">
    <property type="term" value="P:glutamine metabolic process"/>
    <property type="evidence" value="ECO:0007669"/>
    <property type="project" value="TreeGrafter"/>
</dbReference>
<dbReference type="GO" id="GO:0006526">
    <property type="term" value="P:L-arginine biosynthetic process"/>
    <property type="evidence" value="ECO:0007669"/>
    <property type="project" value="UniProtKB-UniRule"/>
</dbReference>
<dbReference type="CDD" id="cd01424">
    <property type="entry name" value="MGS_CPS_II"/>
    <property type="match status" value="1"/>
</dbReference>
<dbReference type="FunFam" id="1.10.1030.10:FF:000002">
    <property type="entry name" value="Carbamoyl-phosphate synthase large chain"/>
    <property type="match status" value="1"/>
</dbReference>
<dbReference type="FunFam" id="3.30.1490.20:FF:000001">
    <property type="entry name" value="Carbamoyl-phosphate synthase large chain"/>
    <property type="match status" value="1"/>
</dbReference>
<dbReference type="FunFam" id="3.30.470.20:FF:000001">
    <property type="entry name" value="Carbamoyl-phosphate synthase large chain"/>
    <property type="match status" value="1"/>
</dbReference>
<dbReference type="FunFam" id="3.30.470.20:FF:000026">
    <property type="entry name" value="Carbamoyl-phosphate synthase large chain"/>
    <property type="match status" value="1"/>
</dbReference>
<dbReference type="FunFam" id="3.40.50.1380:FF:000011">
    <property type="entry name" value="Carbamoyl-phosphate synthase large chain"/>
    <property type="match status" value="1"/>
</dbReference>
<dbReference type="FunFam" id="3.40.50.20:FF:000001">
    <property type="entry name" value="Carbamoyl-phosphate synthase large chain"/>
    <property type="match status" value="2"/>
</dbReference>
<dbReference type="Gene3D" id="3.40.50.20">
    <property type="match status" value="2"/>
</dbReference>
<dbReference type="Gene3D" id="3.30.1490.20">
    <property type="entry name" value="ATP-grasp fold, A domain"/>
    <property type="match status" value="1"/>
</dbReference>
<dbReference type="Gene3D" id="3.30.470.20">
    <property type="entry name" value="ATP-grasp fold, B domain"/>
    <property type="match status" value="2"/>
</dbReference>
<dbReference type="Gene3D" id="1.10.1030.10">
    <property type="entry name" value="Carbamoyl-phosphate synthetase, large subunit oligomerisation domain"/>
    <property type="match status" value="1"/>
</dbReference>
<dbReference type="Gene3D" id="3.40.50.1380">
    <property type="entry name" value="Methylglyoxal synthase-like domain"/>
    <property type="match status" value="1"/>
</dbReference>
<dbReference type="HAMAP" id="MF_01210_A">
    <property type="entry name" value="CPSase_L_chain_A"/>
    <property type="match status" value="1"/>
</dbReference>
<dbReference type="HAMAP" id="MF_01210_B">
    <property type="entry name" value="CPSase_L_chain_B"/>
    <property type="match status" value="1"/>
</dbReference>
<dbReference type="InterPro" id="IPR011761">
    <property type="entry name" value="ATP-grasp"/>
</dbReference>
<dbReference type="InterPro" id="IPR013815">
    <property type="entry name" value="ATP_grasp_subdomain_1"/>
</dbReference>
<dbReference type="InterPro" id="IPR006275">
    <property type="entry name" value="CarbamoylP_synth_lsu"/>
</dbReference>
<dbReference type="InterPro" id="IPR005480">
    <property type="entry name" value="CarbamoylP_synth_lsu_oligo"/>
</dbReference>
<dbReference type="InterPro" id="IPR036897">
    <property type="entry name" value="CarbamoylP_synth_lsu_oligo_sf"/>
</dbReference>
<dbReference type="InterPro" id="IPR005479">
    <property type="entry name" value="CbamoylP_synth_lsu-like_ATP-bd"/>
</dbReference>
<dbReference type="InterPro" id="IPR005483">
    <property type="entry name" value="CbamoylP_synth_lsu_CPSase_dom"/>
</dbReference>
<dbReference type="InterPro" id="IPR011607">
    <property type="entry name" value="MGS-like_dom"/>
</dbReference>
<dbReference type="InterPro" id="IPR036914">
    <property type="entry name" value="MGS-like_dom_sf"/>
</dbReference>
<dbReference type="InterPro" id="IPR033937">
    <property type="entry name" value="MGS_CPS_CarB"/>
</dbReference>
<dbReference type="InterPro" id="IPR016185">
    <property type="entry name" value="PreATP-grasp_dom_sf"/>
</dbReference>
<dbReference type="NCBIfam" id="TIGR01369">
    <property type="entry name" value="CPSaseII_lrg"/>
    <property type="match status" value="1"/>
</dbReference>
<dbReference type="NCBIfam" id="NF003671">
    <property type="entry name" value="PRK05294.1"/>
    <property type="match status" value="1"/>
</dbReference>
<dbReference type="NCBIfam" id="NF009455">
    <property type="entry name" value="PRK12815.1"/>
    <property type="match status" value="1"/>
</dbReference>
<dbReference type="PANTHER" id="PTHR11405:SF53">
    <property type="entry name" value="CARBAMOYL-PHOSPHATE SYNTHASE [AMMONIA], MITOCHONDRIAL"/>
    <property type="match status" value="1"/>
</dbReference>
<dbReference type="PANTHER" id="PTHR11405">
    <property type="entry name" value="CARBAMOYLTRANSFERASE FAMILY MEMBER"/>
    <property type="match status" value="1"/>
</dbReference>
<dbReference type="Pfam" id="PF02786">
    <property type="entry name" value="CPSase_L_D2"/>
    <property type="match status" value="2"/>
</dbReference>
<dbReference type="Pfam" id="PF02787">
    <property type="entry name" value="CPSase_L_D3"/>
    <property type="match status" value="1"/>
</dbReference>
<dbReference type="Pfam" id="PF02142">
    <property type="entry name" value="MGS"/>
    <property type="match status" value="1"/>
</dbReference>
<dbReference type="PRINTS" id="PR00098">
    <property type="entry name" value="CPSASE"/>
</dbReference>
<dbReference type="SMART" id="SM01096">
    <property type="entry name" value="CPSase_L_D3"/>
    <property type="match status" value="1"/>
</dbReference>
<dbReference type="SMART" id="SM01209">
    <property type="entry name" value="GARS_A"/>
    <property type="match status" value="1"/>
</dbReference>
<dbReference type="SMART" id="SM00851">
    <property type="entry name" value="MGS"/>
    <property type="match status" value="1"/>
</dbReference>
<dbReference type="SUPFAM" id="SSF48108">
    <property type="entry name" value="Carbamoyl phosphate synthetase, large subunit connection domain"/>
    <property type="match status" value="1"/>
</dbReference>
<dbReference type="SUPFAM" id="SSF56059">
    <property type="entry name" value="Glutathione synthetase ATP-binding domain-like"/>
    <property type="match status" value="2"/>
</dbReference>
<dbReference type="SUPFAM" id="SSF52335">
    <property type="entry name" value="Methylglyoxal synthase-like"/>
    <property type="match status" value="1"/>
</dbReference>
<dbReference type="SUPFAM" id="SSF52440">
    <property type="entry name" value="PreATP-grasp domain"/>
    <property type="match status" value="2"/>
</dbReference>
<dbReference type="PROSITE" id="PS50975">
    <property type="entry name" value="ATP_GRASP"/>
    <property type="match status" value="2"/>
</dbReference>
<dbReference type="PROSITE" id="PS00866">
    <property type="entry name" value="CPSASE_1"/>
    <property type="match status" value="2"/>
</dbReference>
<dbReference type="PROSITE" id="PS00867">
    <property type="entry name" value="CPSASE_2"/>
    <property type="match status" value="2"/>
</dbReference>
<dbReference type="PROSITE" id="PS51855">
    <property type="entry name" value="MGS"/>
    <property type="match status" value="1"/>
</dbReference>
<reference key="1">
    <citation type="journal article" date="2005" name="J. Bacteriol.">
        <title>Insights on evolution of virulence and resistance from the complete genome analysis of an early methicillin-resistant Staphylococcus aureus strain and a biofilm-producing methicillin-resistant Staphylococcus epidermidis strain.</title>
        <authorList>
            <person name="Gill S.R."/>
            <person name="Fouts D.E."/>
            <person name="Archer G.L."/>
            <person name="Mongodin E.F."/>
            <person name="DeBoy R.T."/>
            <person name="Ravel J."/>
            <person name="Paulsen I.T."/>
            <person name="Kolonay J.F."/>
            <person name="Brinkac L.M."/>
            <person name="Beanan M.J."/>
            <person name="Dodson R.J."/>
            <person name="Daugherty S.C."/>
            <person name="Madupu R."/>
            <person name="Angiuoli S.V."/>
            <person name="Durkin A.S."/>
            <person name="Haft D.H."/>
            <person name="Vamathevan J.J."/>
            <person name="Khouri H."/>
            <person name="Utterback T.R."/>
            <person name="Lee C."/>
            <person name="Dimitrov G."/>
            <person name="Jiang L."/>
            <person name="Qin H."/>
            <person name="Weidman J."/>
            <person name="Tran K."/>
            <person name="Kang K.H."/>
            <person name="Hance I.R."/>
            <person name="Nelson K.E."/>
            <person name="Fraser C.M."/>
        </authorList>
    </citation>
    <scope>NUCLEOTIDE SEQUENCE [LARGE SCALE GENOMIC DNA]</scope>
    <source>
        <strain>ATCC 35984 / DSM 28319 / BCRC 17069 / CCUG 31568 / BM 3577 / RP62A</strain>
    </source>
</reference>